<proteinExistence type="inferred from homology"/>
<dbReference type="EMBL" id="CP000769">
    <property type="protein sequence ID" value="ABS26636.1"/>
    <property type="molecule type" value="Genomic_DNA"/>
</dbReference>
<dbReference type="RefSeq" id="WP_012097224.1">
    <property type="nucleotide sequence ID" value="NC_009675.1"/>
</dbReference>
<dbReference type="SMR" id="A7HD40"/>
<dbReference type="STRING" id="404589.Anae109_2435"/>
<dbReference type="KEGG" id="afw:Anae109_2435"/>
<dbReference type="eggNOG" id="COG1826">
    <property type="taxonomic scope" value="Bacteria"/>
</dbReference>
<dbReference type="HOGENOM" id="CLU_086034_5_4_7"/>
<dbReference type="OrthoDB" id="9813726at2"/>
<dbReference type="Proteomes" id="UP000006382">
    <property type="component" value="Chromosome"/>
</dbReference>
<dbReference type="GO" id="GO:0033281">
    <property type="term" value="C:TAT protein transport complex"/>
    <property type="evidence" value="ECO:0007669"/>
    <property type="project" value="UniProtKB-UniRule"/>
</dbReference>
<dbReference type="GO" id="GO:0008320">
    <property type="term" value="F:protein transmembrane transporter activity"/>
    <property type="evidence" value="ECO:0007669"/>
    <property type="project" value="UniProtKB-UniRule"/>
</dbReference>
<dbReference type="GO" id="GO:0043953">
    <property type="term" value="P:protein transport by the Tat complex"/>
    <property type="evidence" value="ECO:0007669"/>
    <property type="project" value="UniProtKB-UniRule"/>
</dbReference>
<dbReference type="Gene3D" id="1.20.5.3310">
    <property type="match status" value="1"/>
</dbReference>
<dbReference type="HAMAP" id="MF_00236">
    <property type="entry name" value="TatA_E"/>
    <property type="match status" value="1"/>
</dbReference>
<dbReference type="InterPro" id="IPR003369">
    <property type="entry name" value="TatA/B/E"/>
</dbReference>
<dbReference type="InterPro" id="IPR006312">
    <property type="entry name" value="TatA/E"/>
</dbReference>
<dbReference type="NCBIfam" id="TIGR01411">
    <property type="entry name" value="tatAE"/>
    <property type="match status" value="1"/>
</dbReference>
<dbReference type="PANTHER" id="PTHR42982">
    <property type="entry name" value="SEC-INDEPENDENT PROTEIN TRANSLOCASE PROTEIN TATA"/>
    <property type="match status" value="1"/>
</dbReference>
<dbReference type="PANTHER" id="PTHR42982:SF1">
    <property type="entry name" value="SEC-INDEPENDENT PROTEIN TRANSLOCASE PROTEIN TATA"/>
    <property type="match status" value="1"/>
</dbReference>
<dbReference type="Pfam" id="PF02416">
    <property type="entry name" value="TatA_B_E"/>
    <property type="match status" value="1"/>
</dbReference>
<gene>
    <name evidence="1" type="primary">tatA</name>
    <name type="ordered locus">Anae109_2435</name>
</gene>
<keyword id="KW-0997">Cell inner membrane</keyword>
<keyword id="KW-1003">Cell membrane</keyword>
<keyword id="KW-0472">Membrane</keyword>
<keyword id="KW-0653">Protein transport</keyword>
<keyword id="KW-1185">Reference proteome</keyword>
<keyword id="KW-0811">Translocation</keyword>
<keyword id="KW-0812">Transmembrane</keyword>
<keyword id="KW-1133">Transmembrane helix</keyword>
<keyword id="KW-0813">Transport</keyword>
<evidence type="ECO:0000255" key="1">
    <source>
        <dbReference type="HAMAP-Rule" id="MF_00236"/>
    </source>
</evidence>
<evidence type="ECO:0000256" key="2">
    <source>
        <dbReference type="SAM" id="MobiDB-lite"/>
    </source>
</evidence>
<name>TATA_ANADF</name>
<protein>
    <recommendedName>
        <fullName evidence="1">Sec-independent protein translocase protein TatA</fullName>
    </recommendedName>
</protein>
<comment type="function">
    <text evidence="1">Part of the twin-arginine translocation (Tat) system that transports large folded proteins containing a characteristic twin-arginine motif in their signal peptide across membranes. TatA could form the protein-conducting channel of the Tat system.</text>
</comment>
<comment type="subunit">
    <text evidence="1">The Tat system comprises two distinct complexes: a TatABC complex, containing multiple copies of TatA, TatB and TatC subunits, and a separate TatA complex, containing only TatA subunits. Substrates initially bind to the TatABC complex, which probably triggers association of the separate TatA complex to form the active translocon.</text>
</comment>
<comment type="subcellular location">
    <subcellularLocation>
        <location evidence="1">Cell inner membrane</location>
        <topology evidence="1">Single-pass membrane protein</topology>
    </subcellularLocation>
</comment>
<comment type="similarity">
    <text evidence="1">Belongs to the TatA/E family.</text>
</comment>
<reference key="1">
    <citation type="journal article" date="2015" name="Genome Announc.">
        <title>Complete genome sequence of Anaeromyxobacter sp. Fw109-5, an anaerobic, metal-reducing bacterium isolated from a contaminated subsurface environment.</title>
        <authorList>
            <person name="Hwang C."/>
            <person name="Copeland A."/>
            <person name="Lucas S."/>
            <person name="Lapidus A."/>
            <person name="Barry K."/>
            <person name="Glavina Del Rio T."/>
            <person name="Dalin E."/>
            <person name="Tice H."/>
            <person name="Pitluck S."/>
            <person name="Sims D."/>
            <person name="Brettin T."/>
            <person name="Bruce D.C."/>
            <person name="Detter J.C."/>
            <person name="Han C.S."/>
            <person name="Schmutz J."/>
            <person name="Larimer F.W."/>
            <person name="Land M.L."/>
            <person name="Hauser L.J."/>
            <person name="Kyrpides N."/>
            <person name="Lykidis A."/>
            <person name="Richardson P."/>
            <person name="Belieav A."/>
            <person name="Sanford R.A."/>
            <person name="Loeffler F.E."/>
            <person name="Fields M.W."/>
        </authorList>
    </citation>
    <scope>NUCLEOTIDE SEQUENCE [LARGE SCALE GENOMIC DNA]</scope>
    <source>
        <strain>Fw109-5</strain>
    </source>
</reference>
<feature type="chain" id="PRO_1000058947" description="Sec-independent protein translocase protein TatA">
    <location>
        <begin position="1"/>
        <end position="69"/>
    </location>
</feature>
<feature type="transmembrane region" description="Helical" evidence="1">
    <location>
        <begin position="1"/>
        <end position="21"/>
    </location>
</feature>
<feature type="region of interest" description="Disordered" evidence="2">
    <location>
        <begin position="43"/>
        <end position="69"/>
    </location>
</feature>
<organism>
    <name type="scientific">Anaeromyxobacter sp. (strain Fw109-5)</name>
    <dbReference type="NCBI Taxonomy" id="404589"/>
    <lineage>
        <taxon>Bacteria</taxon>
        <taxon>Pseudomonadati</taxon>
        <taxon>Myxococcota</taxon>
        <taxon>Myxococcia</taxon>
        <taxon>Myxococcales</taxon>
        <taxon>Cystobacterineae</taxon>
        <taxon>Anaeromyxobacteraceae</taxon>
        <taxon>Anaeromyxobacter</taxon>
    </lineage>
</organism>
<sequence>MFPKLGMGELVVILLIVVILFGASKLPQLGAGLGQGIRSFKKSFSGEDEEKPSTPGATSSDEASKAKQA</sequence>
<accession>A7HD40</accession>